<keyword id="KW-0379">Hydroxylation</keyword>
<keyword id="KW-1185">Reference proteome</keyword>
<keyword id="KW-0687">Ribonucleoprotein</keyword>
<keyword id="KW-0689">Ribosomal protein</keyword>
<accession>Q55A19</accession>
<accession>Q8T839</accession>
<evidence type="ECO:0000250" key="1"/>
<evidence type="ECO:0000305" key="2"/>
<gene>
    <name type="primary">rps23</name>
    <name type="ORF">DDB_G0272250</name>
</gene>
<name>RS23_DICDI</name>
<dbReference type="EMBL" id="AAFI02000008">
    <property type="protein sequence ID" value="EAL71277.1"/>
    <property type="molecule type" value="Genomic_DNA"/>
</dbReference>
<dbReference type="RefSeq" id="XP_645165.1">
    <property type="nucleotide sequence ID" value="XM_640073.1"/>
</dbReference>
<dbReference type="SMR" id="Q55A19"/>
<dbReference type="FunCoup" id="Q55A19">
    <property type="interactions" value="494"/>
</dbReference>
<dbReference type="STRING" id="44689.Q55A19"/>
<dbReference type="PaxDb" id="44689-DDB0231062"/>
<dbReference type="EnsemblProtists" id="EAL71277">
    <property type="protein sequence ID" value="EAL71277"/>
    <property type="gene ID" value="DDB_G0272250"/>
</dbReference>
<dbReference type="GeneID" id="8618337"/>
<dbReference type="KEGG" id="ddi:DDB_G0272250"/>
<dbReference type="dictyBase" id="DDB_G0272250">
    <property type="gene designation" value="rps23"/>
</dbReference>
<dbReference type="VEuPathDB" id="AmoebaDB:DDB_G0272250"/>
<dbReference type="eggNOG" id="KOG1749">
    <property type="taxonomic scope" value="Eukaryota"/>
</dbReference>
<dbReference type="HOGENOM" id="CLU_115574_0_1_1"/>
<dbReference type="InParanoid" id="Q55A19"/>
<dbReference type="OMA" id="KFRWSQR"/>
<dbReference type="PhylomeDB" id="Q55A19"/>
<dbReference type="Reactome" id="R-DDI-156827">
    <property type="pathway name" value="L13a-mediated translational silencing of Ceruloplasmin expression"/>
</dbReference>
<dbReference type="Reactome" id="R-DDI-1799339">
    <property type="pathway name" value="SRP-dependent cotranslational protein targeting to membrane"/>
</dbReference>
<dbReference type="Reactome" id="R-DDI-72689">
    <property type="pathway name" value="Formation of a pool of free 40S subunits"/>
</dbReference>
<dbReference type="Reactome" id="R-DDI-72695">
    <property type="pathway name" value="Formation of the ternary complex, and subsequently, the 43S complex"/>
</dbReference>
<dbReference type="Reactome" id="R-DDI-72702">
    <property type="pathway name" value="Ribosomal scanning and start codon recognition"/>
</dbReference>
<dbReference type="Reactome" id="R-DDI-72706">
    <property type="pathway name" value="GTP hydrolysis and joining of the 60S ribosomal subunit"/>
</dbReference>
<dbReference type="Reactome" id="R-DDI-975956">
    <property type="pathway name" value="Nonsense Mediated Decay (NMD) independent of the Exon Junction Complex (EJC)"/>
</dbReference>
<dbReference type="Reactome" id="R-DDI-975957">
    <property type="pathway name" value="Nonsense Mediated Decay (NMD) enhanced by the Exon Junction Complex (EJC)"/>
</dbReference>
<dbReference type="PRO" id="PR:Q55A19"/>
<dbReference type="Proteomes" id="UP000002195">
    <property type="component" value="Chromosome 2"/>
</dbReference>
<dbReference type="GO" id="GO:0022627">
    <property type="term" value="C:cytosolic small ribosomal subunit"/>
    <property type="evidence" value="ECO:0000318"/>
    <property type="project" value="GO_Central"/>
</dbReference>
<dbReference type="GO" id="GO:0005840">
    <property type="term" value="C:ribosome"/>
    <property type="evidence" value="ECO:0000318"/>
    <property type="project" value="GO_Central"/>
</dbReference>
<dbReference type="GO" id="GO:0003735">
    <property type="term" value="F:structural constituent of ribosome"/>
    <property type="evidence" value="ECO:0000318"/>
    <property type="project" value="GO_Central"/>
</dbReference>
<dbReference type="GO" id="GO:0006412">
    <property type="term" value="P:translation"/>
    <property type="evidence" value="ECO:0000318"/>
    <property type="project" value="GO_Central"/>
</dbReference>
<dbReference type="CDD" id="cd03367">
    <property type="entry name" value="Ribosomal_S23"/>
    <property type="match status" value="1"/>
</dbReference>
<dbReference type="FunFam" id="2.40.50.140:FF:000007">
    <property type="entry name" value="40S ribosomal protein S23"/>
    <property type="match status" value="1"/>
</dbReference>
<dbReference type="Gene3D" id="2.40.50.140">
    <property type="entry name" value="Nucleic acid-binding proteins"/>
    <property type="match status" value="1"/>
</dbReference>
<dbReference type="InterPro" id="IPR012340">
    <property type="entry name" value="NA-bd_OB-fold"/>
</dbReference>
<dbReference type="InterPro" id="IPR006032">
    <property type="entry name" value="Ribosomal_uS12"/>
</dbReference>
<dbReference type="InterPro" id="IPR005680">
    <property type="entry name" value="Ribosomal_uS12_euk/arc"/>
</dbReference>
<dbReference type="NCBIfam" id="TIGR00982">
    <property type="entry name" value="uS12_E_A"/>
    <property type="match status" value="1"/>
</dbReference>
<dbReference type="PANTHER" id="PTHR11652">
    <property type="entry name" value="30S RIBOSOMAL PROTEIN S12 FAMILY MEMBER"/>
    <property type="match status" value="1"/>
</dbReference>
<dbReference type="Pfam" id="PF00164">
    <property type="entry name" value="Ribosom_S12_S23"/>
    <property type="match status" value="1"/>
</dbReference>
<dbReference type="PIRSF" id="PIRSF002133">
    <property type="entry name" value="Ribosomal_S12/S23"/>
    <property type="match status" value="1"/>
</dbReference>
<dbReference type="SUPFAM" id="SSF50249">
    <property type="entry name" value="Nucleic acid-binding proteins"/>
    <property type="match status" value="1"/>
</dbReference>
<dbReference type="PROSITE" id="PS00055">
    <property type="entry name" value="RIBOSOMAL_S12"/>
    <property type="match status" value="1"/>
</dbReference>
<sequence>MGKPNGLKTARKLRNHRRVQRWNDKLYKKAHFGTALKANPFGGASHASGIVVSRLGIEAKQPNSAIRKCVRVQLKKNGKKITAFVPNDGCLNYIQENDKVLVAGLGRSGHSVGDIPGVRFKVVKVSSVSLIAIYRGIKDKPNV</sequence>
<feature type="chain" id="PRO_0000323431" description="Small ribosomal subunit protein uS12">
    <location>
        <begin position="1"/>
        <end position="143"/>
    </location>
</feature>
<feature type="modified residue" description="Hydroxyproline" evidence="1">
    <location>
        <position position="62"/>
    </location>
</feature>
<proteinExistence type="inferred from homology"/>
<protein>
    <recommendedName>
        <fullName evidence="2">Small ribosomal subunit protein uS12</fullName>
    </recommendedName>
    <alternativeName>
        <fullName>40S ribosomal protein S23</fullName>
    </alternativeName>
</protein>
<comment type="similarity">
    <text evidence="2">Belongs to the universal ribosomal protein uS12 family.</text>
</comment>
<reference key="1">
    <citation type="journal article" date="2002" name="Nature">
        <title>Sequence and analysis of chromosome 2 of Dictyostelium discoideum.</title>
        <authorList>
            <person name="Gloeckner G."/>
            <person name="Eichinger L."/>
            <person name="Szafranski K."/>
            <person name="Pachebat J.A."/>
            <person name="Bankier A.T."/>
            <person name="Dear P.H."/>
            <person name="Lehmann R."/>
            <person name="Baumgart C."/>
            <person name="Parra G."/>
            <person name="Abril J.F."/>
            <person name="Guigo R."/>
            <person name="Kumpf K."/>
            <person name="Tunggal B."/>
            <person name="Cox E.C."/>
            <person name="Quail M.A."/>
            <person name="Platzer M."/>
            <person name="Rosenthal A."/>
            <person name="Noegel A.A."/>
        </authorList>
    </citation>
    <scope>NUCLEOTIDE SEQUENCE [LARGE SCALE GENOMIC DNA]</scope>
    <source>
        <strain>AX4</strain>
    </source>
</reference>
<reference key="2">
    <citation type="journal article" date="2005" name="Nature">
        <title>The genome of the social amoeba Dictyostelium discoideum.</title>
        <authorList>
            <person name="Eichinger L."/>
            <person name="Pachebat J.A."/>
            <person name="Gloeckner G."/>
            <person name="Rajandream M.A."/>
            <person name="Sucgang R."/>
            <person name="Berriman M."/>
            <person name="Song J."/>
            <person name="Olsen R."/>
            <person name="Szafranski K."/>
            <person name="Xu Q."/>
            <person name="Tunggal B."/>
            <person name="Kummerfeld S."/>
            <person name="Madera M."/>
            <person name="Konfortov B.A."/>
            <person name="Rivero F."/>
            <person name="Bankier A.T."/>
            <person name="Lehmann R."/>
            <person name="Hamlin N."/>
            <person name="Davies R."/>
            <person name="Gaudet P."/>
            <person name="Fey P."/>
            <person name="Pilcher K."/>
            <person name="Chen G."/>
            <person name="Saunders D."/>
            <person name="Sodergren E.J."/>
            <person name="Davis P."/>
            <person name="Kerhornou A."/>
            <person name="Nie X."/>
            <person name="Hall N."/>
            <person name="Anjard C."/>
            <person name="Hemphill L."/>
            <person name="Bason N."/>
            <person name="Farbrother P."/>
            <person name="Desany B."/>
            <person name="Just E."/>
            <person name="Morio T."/>
            <person name="Rost R."/>
            <person name="Churcher C.M."/>
            <person name="Cooper J."/>
            <person name="Haydock S."/>
            <person name="van Driessche N."/>
            <person name="Cronin A."/>
            <person name="Goodhead I."/>
            <person name="Muzny D.M."/>
            <person name="Mourier T."/>
            <person name="Pain A."/>
            <person name="Lu M."/>
            <person name="Harper D."/>
            <person name="Lindsay R."/>
            <person name="Hauser H."/>
            <person name="James K.D."/>
            <person name="Quiles M."/>
            <person name="Madan Babu M."/>
            <person name="Saito T."/>
            <person name="Buchrieser C."/>
            <person name="Wardroper A."/>
            <person name="Felder M."/>
            <person name="Thangavelu M."/>
            <person name="Johnson D."/>
            <person name="Knights A."/>
            <person name="Loulseged H."/>
            <person name="Mungall K.L."/>
            <person name="Oliver K."/>
            <person name="Price C."/>
            <person name="Quail M.A."/>
            <person name="Urushihara H."/>
            <person name="Hernandez J."/>
            <person name="Rabbinowitsch E."/>
            <person name="Steffen D."/>
            <person name="Sanders M."/>
            <person name="Ma J."/>
            <person name="Kohara Y."/>
            <person name="Sharp S."/>
            <person name="Simmonds M.N."/>
            <person name="Spiegler S."/>
            <person name="Tivey A."/>
            <person name="Sugano S."/>
            <person name="White B."/>
            <person name="Walker D."/>
            <person name="Woodward J.R."/>
            <person name="Winckler T."/>
            <person name="Tanaka Y."/>
            <person name="Shaulsky G."/>
            <person name="Schleicher M."/>
            <person name="Weinstock G.M."/>
            <person name="Rosenthal A."/>
            <person name="Cox E.C."/>
            <person name="Chisholm R.L."/>
            <person name="Gibbs R.A."/>
            <person name="Loomis W.F."/>
            <person name="Platzer M."/>
            <person name="Kay R.R."/>
            <person name="Williams J.G."/>
            <person name="Dear P.H."/>
            <person name="Noegel A.A."/>
            <person name="Barrell B.G."/>
            <person name="Kuspa A."/>
        </authorList>
    </citation>
    <scope>NUCLEOTIDE SEQUENCE [LARGE SCALE GENOMIC DNA]</scope>
    <source>
        <strain>AX4</strain>
    </source>
</reference>
<organism>
    <name type="scientific">Dictyostelium discoideum</name>
    <name type="common">Social amoeba</name>
    <dbReference type="NCBI Taxonomy" id="44689"/>
    <lineage>
        <taxon>Eukaryota</taxon>
        <taxon>Amoebozoa</taxon>
        <taxon>Evosea</taxon>
        <taxon>Eumycetozoa</taxon>
        <taxon>Dictyostelia</taxon>
        <taxon>Dictyosteliales</taxon>
        <taxon>Dictyosteliaceae</taxon>
        <taxon>Dictyostelium</taxon>
    </lineage>
</organism>